<dbReference type="EC" id="4.2.1.19" evidence="1"/>
<dbReference type="EMBL" id="CP000448">
    <property type="protein sequence ID" value="ABI69065.1"/>
    <property type="molecule type" value="Genomic_DNA"/>
</dbReference>
<dbReference type="RefSeq" id="WP_011641160.1">
    <property type="nucleotide sequence ID" value="NC_008346.1"/>
</dbReference>
<dbReference type="SMR" id="Q0AW39"/>
<dbReference type="STRING" id="335541.Swol_1767"/>
<dbReference type="KEGG" id="swo:Swol_1767"/>
<dbReference type="eggNOG" id="COG0131">
    <property type="taxonomic scope" value="Bacteria"/>
</dbReference>
<dbReference type="HOGENOM" id="CLU_044308_3_0_9"/>
<dbReference type="OrthoDB" id="9790411at2"/>
<dbReference type="UniPathway" id="UPA00031">
    <property type="reaction ID" value="UER00011"/>
</dbReference>
<dbReference type="Proteomes" id="UP000001968">
    <property type="component" value="Chromosome"/>
</dbReference>
<dbReference type="GO" id="GO:0005737">
    <property type="term" value="C:cytoplasm"/>
    <property type="evidence" value="ECO:0007669"/>
    <property type="project" value="UniProtKB-SubCell"/>
</dbReference>
<dbReference type="GO" id="GO:0004424">
    <property type="term" value="F:imidazoleglycerol-phosphate dehydratase activity"/>
    <property type="evidence" value="ECO:0007669"/>
    <property type="project" value="UniProtKB-UniRule"/>
</dbReference>
<dbReference type="GO" id="GO:0000105">
    <property type="term" value="P:L-histidine biosynthetic process"/>
    <property type="evidence" value="ECO:0007669"/>
    <property type="project" value="UniProtKB-UniRule"/>
</dbReference>
<dbReference type="CDD" id="cd07914">
    <property type="entry name" value="IGPD"/>
    <property type="match status" value="1"/>
</dbReference>
<dbReference type="FunFam" id="3.30.230.40:FF:000001">
    <property type="entry name" value="Imidazoleglycerol-phosphate dehydratase HisB"/>
    <property type="match status" value="1"/>
</dbReference>
<dbReference type="FunFam" id="3.30.230.40:FF:000003">
    <property type="entry name" value="Imidazoleglycerol-phosphate dehydratase HisB"/>
    <property type="match status" value="1"/>
</dbReference>
<dbReference type="Gene3D" id="3.30.230.40">
    <property type="entry name" value="Imidazole glycerol phosphate dehydratase, domain 1"/>
    <property type="match status" value="2"/>
</dbReference>
<dbReference type="HAMAP" id="MF_00076">
    <property type="entry name" value="HisB"/>
    <property type="match status" value="1"/>
</dbReference>
<dbReference type="InterPro" id="IPR038494">
    <property type="entry name" value="IGPD_sf"/>
</dbReference>
<dbReference type="InterPro" id="IPR000807">
    <property type="entry name" value="ImidazoleglycerolP_deHydtase"/>
</dbReference>
<dbReference type="InterPro" id="IPR020565">
    <property type="entry name" value="ImidazoleglycerP_deHydtase_CS"/>
</dbReference>
<dbReference type="InterPro" id="IPR020568">
    <property type="entry name" value="Ribosomal_Su5_D2-typ_SF"/>
</dbReference>
<dbReference type="NCBIfam" id="NF002111">
    <property type="entry name" value="PRK00951.2-1"/>
    <property type="match status" value="1"/>
</dbReference>
<dbReference type="NCBIfam" id="NF002114">
    <property type="entry name" value="PRK00951.2-4"/>
    <property type="match status" value="1"/>
</dbReference>
<dbReference type="PANTHER" id="PTHR23133:SF2">
    <property type="entry name" value="IMIDAZOLEGLYCEROL-PHOSPHATE DEHYDRATASE"/>
    <property type="match status" value="1"/>
</dbReference>
<dbReference type="PANTHER" id="PTHR23133">
    <property type="entry name" value="IMIDAZOLEGLYCEROL-PHOSPHATE DEHYDRATASE HIS7"/>
    <property type="match status" value="1"/>
</dbReference>
<dbReference type="Pfam" id="PF00475">
    <property type="entry name" value="IGPD"/>
    <property type="match status" value="1"/>
</dbReference>
<dbReference type="SUPFAM" id="SSF54211">
    <property type="entry name" value="Ribosomal protein S5 domain 2-like"/>
    <property type="match status" value="2"/>
</dbReference>
<dbReference type="PROSITE" id="PS00954">
    <property type="entry name" value="IGP_DEHYDRATASE_1"/>
    <property type="match status" value="1"/>
</dbReference>
<dbReference type="PROSITE" id="PS00955">
    <property type="entry name" value="IGP_DEHYDRATASE_2"/>
    <property type="match status" value="1"/>
</dbReference>
<protein>
    <recommendedName>
        <fullName evidence="1">Imidazoleglycerol-phosphate dehydratase</fullName>
        <shortName evidence="1">IGPD</shortName>
        <ecNumber evidence="1">4.2.1.19</ecNumber>
    </recommendedName>
</protein>
<accession>Q0AW39</accession>
<name>HIS7_SYNWW</name>
<feature type="chain" id="PRO_0000336353" description="Imidazoleglycerol-phosphate dehydratase">
    <location>
        <begin position="1"/>
        <end position="197"/>
    </location>
</feature>
<comment type="catalytic activity">
    <reaction evidence="1">
        <text>D-erythro-1-(imidazol-4-yl)glycerol 3-phosphate = 3-(imidazol-4-yl)-2-oxopropyl phosphate + H2O</text>
        <dbReference type="Rhea" id="RHEA:11040"/>
        <dbReference type="ChEBI" id="CHEBI:15377"/>
        <dbReference type="ChEBI" id="CHEBI:57766"/>
        <dbReference type="ChEBI" id="CHEBI:58278"/>
        <dbReference type="EC" id="4.2.1.19"/>
    </reaction>
</comment>
<comment type="pathway">
    <text evidence="1">Amino-acid biosynthesis; L-histidine biosynthesis; L-histidine from 5-phospho-alpha-D-ribose 1-diphosphate: step 6/9.</text>
</comment>
<comment type="subcellular location">
    <subcellularLocation>
        <location evidence="1">Cytoplasm</location>
    </subcellularLocation>
</comment>
<comment type="similarity">
    <text evidence="1">Belongs to the imidazoleglycerol-phosphate dehydratase family.</text>
</comment>
<gene>
    <name evidence="1" type="primary">hisB</name>
    <name type="ordered locus">Swol_1767</name>
</gene>
<evidence type="ECO:0000255" key="1">
    <source>
        <dbReference type="HAMAP-Rule" id="MF_00076"/>
    </source>
</evidence>
<reference key="1">
    <citation type="journal article" date="2010" name="Environ. Microbiol.">
        <title>The genome of Syntrophomonas wolfei: new insights into syntrophic metabolism and biohydrogen production.</title>
        <authorList>
            <person name="Sieber J.R."/>
            <person name="Sims D.R."/>
            <person name="Han C."/>
            <person name="Kim E."/>
            <person name="Lykidis A."/>
            <person name="Lapidus A.L."/>
            <person name="McDonnald E."/>
            <person name="Rohlin L."/>
            <person name="Culley D.E."/>
            <person name="Gunsalus R."/>
            <person name="McInerney M.J."/>
        </authorList>
    </citation>
    <scope>NUCLEOTIDE SEQUENCE [LARGE SCALE GENOMIC DNA]</scope>
    <source>
        <strain>DSM 2245B / Goettingen</strain>
    </source>
</reference>
<proteinExistence type="inferred from homology"/>
<organism>
    <name type="scientific">Syntrophomonas wolfei subsp. wolfei (strain DSM 2245B / Goettingen)</name>
    <dbReference type="NCBI Taxonomy" id="335541"/>
    <lineage>
        <taxon>Bacteria</taxon>
        <taxon>Bacillati</taxon>
        <taxon>Bacillota</taxon>
        <taxon>Clostridia</taxon>
        <taxon>Eubacteriales</taxon>
        <taxon>Syntrophomonadaceae</taxon>
        <taxon>Syntrophomonas</taxon>
    </lineage>
</organism>
<keyword id="KW-0028">Amino-acid biosynthesis</keyword>
<keyword id="KW-0963">Cytoplasm</keyword>
<keyword id="KW-0368">Histidine biosynthesis</keyword>
<keyword id="KW-0456">Lyase</keyword>
<keyword id="KW-1185">Reference proteome</keyword>
<sequence>MDNNRIGEVQRKTSETEVLLQVELDGTGNHQIDTEIPFLNHMLTLFSFHSLCNLRVTARGDVEVDDHHSVEDIAICLGQALKMALGDKRGITRYGEATVPMDESLARVVLDLSGRSYLVYNVPMEREMIGNFATENVREFFQAVAANAGINIHIDLLRGSNTHHIIEAVFKAFARALKDAIEIEPRMEGIWSSKRVL</sequence>